<dbReference type="EC" id="1.15.1.1"/>
<dbReference type="EMBL" id="D12984">
    <property type="protein sequence ID" value="BAA02363.1"/>
    <property type="molecule type" value="mRNA"/>
</dbReference>
<dbReference type="EMBL" id="D85499">
    <property type="protein sequence ID" value="BAA12821.1"/>
    <property type="molecule type" value="Genomic_DNA"/>
</dbReference>
<dbReference type="EMBL" id="Z81057">
    <property type="protein sequence ID" value="CAB02913.1"/>
    <property type="molecule type" value="Genomic_DNA"/>
</dbReference>
<dbReference type="PIR" id="JC5122">
    <property type="entry name" value="JC5122"/>
</dbReference>
<dbReference type="RefSeq" id="NP_492290.1">
    <property type="nucleotide sequence ID" value="NM_059889.7"/>
</dbReference>
<dbReference type="PDB" id="3DC6">
    <property type="method" value="X-ray"/>
    <property type="resolution" value="1.80 A"/>
    <property type="chains" value="A/C=25-221"/>
</dbReference>
<dbReference type="PDBsum" id="3DC6"/>
<dbReference type="SMR" id="P31161"/>
<dbReference type="BioGRID" id="38065">
    <property type="interactions" value="19"/>
</dbReference>
<dbReference type="FunCoup" id="P31161">
    <property type="interactions" value="1763"/>
</dbReference>
<dbReference type="STRING" id="6239.F10D11.1.2"/>
<dbReference type="iPTMnet" id="P31161"/>
<dbReference type="PaxDb" id="6239-F10D11.1.2"/>
<dbReference type="PeptideAtlas" id="P31161"/>
<dbReference type="EnsemblMetazoa" id="F10D11.1.1">
    <property type="protein sequence ID" value="F10D11.1.1"/>
    <property type="gene ID" value="WBGene00004931"/>
</dbReference>
<dbReference type="GeneID" id="172632"/>
<dbReference type="KEGG" id="cel:CELE_F10D11.1"/>
<dbReference type="UCSC" id="F10D11.1.1">
    <property type="organism name" value="c. elegans"/>
</dbReference>
<dbReference type="AGR" id="WB:WBGene00004931"/>
<dbReference type="CTD" id="172632"/>
<dbReference type="WormBase" id="F10D11.1">
    <property type="protein sequence ID" value="CE09323"/>
    <property type="gene ID" value="WBGene00004931"/>
    <property type="gene designation" value="sod-2"/>
</dbReference>
<dbReference type="eggNOG" id="KOG0876">
    <property type="taxonomic scope" value="Eukaryota"/>
</dbReference>
<dbReference type="GeneTree" id="ENSGT00390000011877"/>
<dbReference type="HOGENOM" id="CLU_031625_2_1_1"/>
<dbReference type="InParanoid" id="P31161"/>
<dbReference type="OMA" id="DSLINWD"/>
<dbReference type="OrthoDB" id="239262at2759"/>
<dbReference type="PhylomeDB" id="P31161"/>
<dbReference type="Reactome" id="R-CEL-3299685">
    <property type="pathway name" value="Detoxification of Reactive Oxygen Species"/>
</dbReference>
<dbReference type="EvolutionaryTrace" id="P31161"/>
<dbReference type="PRO" id="PR:P31161"/>
<dbReference type="Proteomes" id="UP000001940">
    <property type="component" value="Chromosome I"/>
</dbReference>
<dbReference type="Bgee" id="WBGene00004931">
    <property type="expression patterns" value="Expressed in embryo and 4 other cell types or tissues"/>
</dbReference>
<dbReference type="GO" id="GO:0005759">
    <property type="term" value="C:mitochondrial matrix"/>
    <property type="evidence" value="ECO:0007669"/>
    <property type="project" value="UniProtKB-SubCell"/>
</dbReference>
<dbReference type="GO" id="GO:0005739">
    <property type="term" value="C:mitochondrion"/>
    <property type="evidence" value="ECO:0007005"/>
    <property type="project" value="WormBase"/>
</dbReference>
<dbReference type="GO" id="GO:0098803">
    <property type="term" value="C:respiratory chain complex"/>
    <property type="evidence" value="ECO:0000314"/>
    <property type="project" value="WormBase"/>
</dbReference>
<dbReference type="GO" id="GO:0030145">
    <property type="term" value="F:manganese ion binding"/>
    <property type="evidence" value="ECO:0000318"/>
    <property type="project" value="GO_Central"/>
</dbReference>
<dbReference type="GO" id="GO:0042803">
    <property type="term" value="F:protein homodimerization activity"/>
    <property type="evidence" value="ECO:0000314"/>
    <property type="project" value="WormBase"/>
</dbReference>
<dbReference type="GO" id="GO:0004784">
    <property type="term" value="F:superoxide dismutase activity"/>
    <property type="evidence" value="ECO:0000314"/>
    <property type="project" value="WormBase"/>
</dbReference>
<dbReference type="GO" id="GO:0019430">
    <property type="term" value="P:removal of superoxide radicals"/>
    <property type="evidence" value="ECO:0000315"/>
    <property type="project" value="WormBase"/>
</dbReference>
<dbReference type="FunFam" id="1.10.287.990:FF:000001">
    <property type="entry name" value="Superoxide dismutase"/>
    <property type="match status" value="1"/>
</dbReference>
<dbReference type="FunFam" id="3.55.40.20:FF:000003">
    <property type="entry name" value="Superoxide dismutase [Mn], mitochondrial"/>
    <property type="match status" value="1"/>
</dbReference>
<dbReference type="Gene3D" id="1.10.287.990">
    <property type="entry name" value="Fe,Mn superoxide dismutase (SOD) domain"/>
    <property type="match status" value="1"/>
</dbReference>
<dbReference type="Gene3D" id="3.55.40.20">
    <property type="entry name" value="Iron/manganese superoxide dismutase, C-terminal domain"/>
    <property type="match status" value="1"/>
</dbReference>
<dbReference type="InterPro" id="IPR050265">
    <property type="entry name" value="Fe/Mn_Superoxide_Dismutase"/>
</dbReference>
<dbReference type="InterPro" id="IPR001189">
    <property type="entry name" value="Mn/Fe_SOD"/>
</dbReference>
<dbReference type="InterPro" id="IPR019833">
    <property type="entry name" value="Mn/Fe_SOD_BS"/>
</dbReference>
<dbReference type="InterPro" id="IPR019832">
    <property type="entry name" value="Mn/Fe_SOD_C"/>
</dbReference>
<dbReference type="InterPro" id="IPR019831">
    <property type="entry name" value="Mn/Fe_SOD_N"/>
</dbReference>
<dbReference type="InterPro" id="IPR036324">
    <property type="entry name" value="Mn/Fe_SOD_N_sf"/>
</dbReference>
<dbReference type="InterPro" id="IPR036314">
    <property type="entry name" value="SOD_C_sf"/>
</dbReference>
<dbReference type="PANTHER" id="PTHR11404">
    <property type="entry name" value="SUPEROXIDE DISMUTASE 2"/>
    <property type="match status" value="1"/>
</dbReference>
<dbReference type="PANTHER" id="PTHR11404:SF6">
    <property type="entry name" value="SUPEROXIDE DISMUTASE [MN], MITOCHONDRIAL"/>
    <property type="match status" value="1"/>
</dbReference>
<dbReference type="Pfam" id="PF02777">
    <property type="entry name" value="Sod_Fe_C"/>
    <property type="match status" value="1"/>
</dbReference>
<dbReference type="Pfam" id="PF00081">
    <property type="entry name" value="Sod_Fe_N"/>
    <property type="match status" value="1"/>
</dbReference>
<dbReference type="PIRSF" id="PIRSF000349">
    <property type="entry name" value="SODismutase"/>
    <property type="match status" value="1"/>
</dbReference>
<dbReference type="PRINTS" id="PR01703">
    <property type="entry name" value="MNSODISMTASE"/>
</dbReference>
<dbReference type="SUPFAM" id="SSF54719">
    <property type="entry name" value="Fe,Mn superoxide dismutase (SOD), C-terminal domain"/>
    <property type="match status" value="1"/>
</dbReference>
<dbReference type="SUPFAM" id="SSF46609">
    <property type="entry name" value="Fe,Mn superoxide dismutase (SOD), N-terminal domain"/>
    <property type="match status" value="1"/>
</dbReference>
<dbReference type="PROSITE" id="PS00088">
    <property type="entry name" value="SOD_MN"/>
    <property type="match status" value="1"/>
</dbReference>
<comment type="function">
    <text>Destroys superoxide anion radicals which are normally produced within the cells and which are toxic to biological systems.</text>
</comment>
<comment type="catalytic activity">
    <reaction>
        <text>2 superoxide + 2 H(+) = H2O2 + O2</text>
        <dbReference type="Rhea" id="RHEA:20696"/>
        <dbReference type="ChEBI" id="CHEBI:15378"/>
        <dbReference type="ChEBI" id="CHEBI:15379"/>
        <dbReference type="ChEBI" id="CHEBI:16240"/>
        <dbReference type="ChEBI" id="CHEBI:18421"/>
        <dbReference type="EC" id="1.15.1.1"/>
    </reaction>
</comment>
<comment type="cofactor">
    <cofactor evidence="1">
        <name>Mn(2+)</name>
        <dbReference type="ChEBI" id="CHEBI:29035"/>
    </cofactor>
    <text evidence="1">Binds 1 Mn(2+) ion per subunit.</text>
</comment>
<comment type="subunit">
    <text>Homotetramer.</text>
</comment>
<comment type="subcellular location">
    <subcellularLocation>
        <location>Mitochondrion matrix</location>
    </subcellularLocation>
</comment>
<comment type="similarity">
    <text evidence="2">Belongs to the iron/manganese superoxide dismutase family.</text>
</comment>
<proteinExistence type="evidence at protein level"/>
<name>SODM1_CAEEL</name>
<feature type="transit peptide" description="Mitochondrion" evidence="1">
    <location>
        <begin position="1"/>
        <end position="24"/>
    </location>
</feature>
<feature type="chain" id="PRO_0000032876" description="Superoxide dismutase [Mn] 1, mitochondrial">
    <location>
        <begin position="25"/>
        <end position="221"/>
    </location>
</feature>
<feature type="binding site" evidence="1">
    <location>
        <position position="50"/>
    </location>
    <ligand>
        <name>Mn(2+)</name>
        <dbReference type="ChEBI" id="CHEBI:29035"/>
    </ligand>
</feature>
<feature type="binding site" evidence="1">
    <location>
        <position position="98"/>
    </location>
    <ligand>
        <name>Mn(2+)</name>
        <dbReference type="ChEBI" id="CHEBI:29035"/>
    </ligand>
</feature>
<feature type="binding site" evidence="1">
    <location>
        <position position="182"/>
    </location>
    <ligand>
        <name>Mn(2+)</name>
        <dbReference type="ChEBI" id="CHEBI:29035"/>
    </ligand>
</feature>
<feature type="binding site" evidence="1">
    <location>
        <position position="186"/>
    </location>
    <ligand>
        <name>Mn(2+)</name>
        <dbReference type="ChEBI" id="CHEBI:29035"/>
    </ligand>
</feature>
<feature type="turn" evidence="3">
    <location>
        <begin position="35"/>
        <end position="41"/>
    </location>
</feature>
<feature type="helix" evidence="3">
    <location>
        <begin position="44"/>
        <end position="52"/>
    </location>
</feature>
<feature type="helix" evidence="3">
    <location>
        <begin position="54"/>
        <end position="74"/>
    </location>
</feature>
<feature type="helix" evidence="3">
    <location>
        <begin position="78"/>
        <end position="83"/>
    </location>
</feature>
<feature type="helix" evidence="3">
    <location>
        <begin position="85"/>
        <end position="103"/>
    </location>
</feature>
<feature type="helix" evidence="3">
    <location>
        <begin position="114"/>
        <end position="124"/>
    </location>
</feature>
<feature type="helix" evidence="3">
    <location>
        <begin position="127"/>
        <end position="139"/>
    </location>
</feature>
<feature type="strand" evidence="3">
    <location>
        <begin position="143"/>
        <end position="152"/>
    </location>
</feature>
<feature type="turn" evidence="3">
    <location>
        <begin position="153"/>
        <end position="156"/>
    </location>
</feature>
<feature type="strand" evidence="3">
    <location>
        <begin position="157"/>
        <end position="164"/>
    </location>
</feature>
<feature type="helix" evidence="3">
    <location>
        <begin position="169"/>
        <end position="173"/>
    </location>
</feature>
<feature type="strand" evidence="3">
    <location>
        <begin position="176"/>
        <end position="182"/>
    </location>
</feature>
<feature type="helix" evidence="3">
    <location>
        <begin position="185"/>
        <end position="187"/>
    </location>
</feature>
<feature type="helix" evidence="3">
    <location>
        <begin position="189"/>
        <end position="192"/>
    </location>
</feature>
<feature type="helix" evidence="3">
    <location>
        <begin position="196"/>
        <end position="202"/>
    </location>
</feature>
<feature type="helix" evidence="3">
    <location>
        <begin position="203"/>
        <end position="206"/>
    </location>
</feature>
<feature type="helix" evidence="3">
    <location>
        <begin position="209"/>
        <end position="219"/>
    </location>
</feature>
<organism>
    <name type="scientific">Caenorhabditis elegans</name>
    <dbReference type="NCBI Taxonomy" id="6239"/>
    <lineage>
        <taxon>Eukaryota</taxon>
        <taxon>Metazoa</taxon>
        <taxon>Ecdysozoa</taxon>
        <taxon>Nematoda</taxon>
        <taxon>Chromadorea</taxon>
        <taxon>Rhabditida</taxon>
        <taxon>Rhabditina</taxon>
        <taxon>Rhabditomorpha</taxon>
        <taxon>Rhabditoidea</taxon>
        <taxon>Rhabditidae</taxon>
        <taxon>Peloderinae</taxon>
        <taxon>Caenorhabditis</taxon>
    </lineage>
</organism>
<protein>
    <recommendedName>
        <fullName>Superoxide dismutase [Mn] 1, mitochondrial</fullName>
        <ecNumber>1.15.1.1</ecNumber>
    </recommendedName>
</protein>
<evidence type="ECO:0000250" key="1"/>
<evidence type="ECO:0000305" key="2"/>
<evidence type="ECO:0007829" key="3">
    <source>
        <dbReference type="PDB" id="3DC6"/>
    </source>
</evidence>
<gene>
    <name type="primary">sod-2</name>
    <name type="synonym">sdm-1</name>
    <name type="ORF">F10D11.1</name>
</gene>
<keyword id="KW-0002">3D-structure</keyword>
<keyword id="KW-0464">Manganese</keyword>
<keyword id="KW-0479">Metal-binding</keyword>
<keyword id="KW-0496">Mitochondrion</keyword>
<keyword id="KW-0560">Oxidoreductase</keyword>
<keyword id="KW-1185">Reference proteome</keyword>
<keyword id="KW-0809">Transit peptide</keyword>
<sequence length="221" mass="24537">MLQNTVRCVSKLVQPITGVAAVRSKHSLPDLPYDYADLEPVISHEIMQLHHQKHHATYVNNLNQIEEKLHEAVSKGNVKEAIALQPALKFNGGGHINHSIFWTNLAKDGGEPSAELLTAIKSDFGSLDNLQKQLSASTVAVQGSGWGWLGYCPKGKILKVATCANQDPLEATTGLVPLFGIDVWEHAYYLQYKNVRPDYVNAIWKIANWKNVSERFAKAQQ</sequence>
<reference key="1">
    <citation type="submission" date="1992-09" db="EMBL/GenBank/DDBJ databases">
        <title>Cloning and characterization of manganese superoxide dismutase gene in C.elegans.</title>
        <authorList>
            <person name="Suzuki N."/>
            <person name="Ishii N."/>
            <person name="Suzuki K."/>
        </authorList>
    </citation>
    <scope>NUCLEOTIDE SEQUENCE [MRNA]</scope>
</reference>
<reference key="2">
    <citation type="journal article" date="1996" name="DNA Res.">
        <title>Cloning, sequencing and mapping of a manganese superoxide dismutase gene of the nematode Caenorhabditis elegans.</title>
        <authorList>
            <person name="Suzuki N."/>
            <person name="Inokuma K."/>
            <person name="Yasuda K."/>
            <person name="Ishii N."/>
        </authorList>
    </citation>
    <scope>NUCLEOTIDE SEQUENCE [GENOMIC DNA]</scope>
</reference>
<reference key="3">
    <citation type="journal article" date="1998" name="Science">
        <title>Genome sequence of the nematode C. elegans: a platform for investigating biology.</title>
        <authorList>
            <consortium name="The C. elegans sequencing consortium"/>
        </authorList>
    </citation>
    <scope>NUCLEOTIDE SEQUENCE [LARGE SCALE GENOMIC DNA]</scope>
    <source>
        <strain>Bristol N2</strain>
    </source>
</reference>
<accession>P31161</accession>